<keyword id="KW-0134">Cell wall</keyword>
<keyword id="KW-0572">Peptidoglycan-anchor</keyword>
<keyword id="KW-0964">Secreted</keyword>
<keyword id="KW-0732">Signal</keyword>
<keyword id="KW-0843">Virulence</keyword>
<accession>Q8NXJ1</accession>
<evidence type="ECO:0000250" key="1"/>
<evidence type="ECO:0000250" key="2">
    <source>
        <dbReference type="UniProtKB" id="Q2G015"/>
    </source>
</evidence>
<evidence type="ECO:0000255" key="3"/>
<evidence type="ECO:0000255" key="4">
    <source>
        <dbReference type="PROSITE-ProRule" id="PRU00477"/>
    </source>
</evidence>
<evidence type="ECO:0000256" key="5">
    <source>
        <dbReference type="SAM" id="MobiDB-lite"/>
    </source>
</evidence>
<evidence type="ECO:0000305" key="6"/>
<gene>
    <name type="primary">clfA</name>
    <name type="ordered locus">MW0764</name>
</gene>
<feature type="signal peptide" evidence="3">
    <location>
        <begin position="1"/>
        <end position="39"/>
    </location>
</feature>
<feature type="chain" id="PRO_0000042002" description="Clumping factor A">
    <location>
        <begin position="40"/>
        <end position="912"/>
    </location>
</feature>
<feature type="propeptide" id="PRO_0000042003" description="Removed by sortase" evidence="4">
    <location>
        <begin position="913"/>
        <end position="946"/>
    </location>
</feature>
<feature type="region of interest" description="Disordered" evidence="5">
    <location>
        <begin position="34"/>
        <end position="199"/>
    </location>
</feature>
<feature type="region of interest" description="Ligand binding A region" evidence="1">
    <location>
        <begin position="40"/>
        <end position="542"/>
    </location>
</feature>
<feature type="region of interest" description="Disordered" evidence="5">
    <location>
        <begin position="528"/>
        <end position="917"/>
    </location>
</feature>
<feature type="short sequence motif" description="YSIRK-G/S signaling motif" evidence="2">
    <location>
        <begin position="9"/>
        <end position="20"/>
    </location>
</feature>
<feature type="short sequence motif" description="LPXTG sorting signal" evidence="4">
    <location>
        <begin position="909"/>
        <end position="913"/>
    </location>
</feature>
<feature type="compositionally biased region" description="Low complexity" evidence="5">
    <location>
        <begin position="47"/>
        <end position="65"/>
    </location>
</feature>
<feature type="compositionally biased region" description="Polar residues" evidence="5">
    <location>
        <begin position="71"/>
        <end position="111"/>
    </location>
</feature>
<feature type="compositionally biased region" description="Low complexity" evidence="5">
    <location>
        <begin position="117"/>
        <end position="131"/>
    </location>
</feature>
<feature type="compositionally biased region" description="Low complexity" evidence="5">
    <location>
        <begin position="142"/>
        <end position="161"/>
    </location>
</feature>
<feature type="compositionally biased region" description="Polar residues" evidence="5">
    <location>
        <begin position="162"/>
        <end position="199"/>
    </location>
</feature>
<feature type="compositionally biased region" description="Acidic residues" evidence="5">
    <location>
        <begin position="546"/>
        <end position="564"/>
    </location>
</feature>
<feature type="compositionally biased region" description="Low complexity" evidence="5">
    <location>
        <begin position="565"/>
        <end position="597"/>
    </location>
</feature>
<feature type="compositionally biased region" description="Acidic residues" evidence="5">
    <location>
        <begin position="598"/>
        <end position="874"/>
    </location>
</feature>
<feature type="compositionally biased region" description="Low complexity" evidence="5">
    <location>
        <begin position="875"/>
        <end position="893"/>
    </location>
</feature>
<feature type="compositionally biased region" description="Basic and acidic residues" evidence="5">
    <location>
        <begin position="900"/>
        <end position="909"/>
    </location>
</feature>
<feature type="modified residue" description="Pentaglycyl murein peptidoglycan amidated threonine" evidence="4">
    <location>
        <position position="912"/>
    </location>
</feature>
<protein>
    <recommendedName>
        <fullName>Clumping factor A</fullName>
    </recommendedName>
    <alternativeName>
        <fullName>Fibrinogen receptor A</fullName>
    </alternativeName>
    <alternativeName>
        <fullName>Fibrinogen-binding protein A</fullName>
    </alternativeName>
</protein>
<name>CLFA_STAAW</name>
<dbReference type="EMBL" id="BA000033">
    <property type="protein sequence ID" value="BAB94629.1"/>
    <property type="molecule type" value="Genomic_DNA"/>
</dbReference>
<dbReference type="RefSeq" id="WP_001056172.1">
    <property type="nucleotide sequence ID" value="NC_003923.1"/>
</dbReference>
<dbReference type="SMR" id="Q8NXJ1"/>
<dbReference type="KEGG" id="sam:MW0764"/>
<dbReference type="HOGENOM" id="CLU_010159_0_0_9"/>
<dbReference type="PRO" id="PR:Q8NXJ1"/>
<dbReference type="GO" id="GO:0005576">
    <property type="term" value="C:extracellular region"/>
    <property type="evidence" value="ECO:0007669"/>
    <property type="project" value="UniProtKB-KW"/>
</dbReference>
<dbReference type="GO" id="GO:0007155">
    <property type="term" value="P:cell adhesion"/>
    <property type="evidence" value="ECO:0007669"/>
    <property type="project" value="InterPro"/>
</dbReference>
<dbReference type="FunFam" id="2.60.40.1290:FF:000001">
    <property type="entry name" value="Clumping factor A"/>
    <property type="match status" value="1"/>
</dbReference>
<dbReference type="Gene3D" id="2.60.40.1280">
    <property type="match status" value="1"/>
</dbReference>
<dbReference type="Gene3D" id="2.60.40.1290">
    <property type="match status" value="1"/>
</dbReference>
<dbReference type="InterPro" id="IPR011266">
    <property type="entry name" value="Adhesin_Fg-bd_dom_2"/>
</dbReference>
<dbReference type="InterPro" id="IPR008966">
    <property type="entry name" value="Adhesion_dom_sf"/>
</dbReference>
<dbReference type="InterPro" id="IPR011252">
    <property type="entry name" value="Fibrogen-bd_dom1"/>
</dbReference>
<dbReference type="InterPro" id="IPR019931">
    <property type="entry name" value="LPXTG_anchor"/>
</dbReference>
<dbReference type="InterPro" id="IPR050972">
    <property type="entry name" value="SDr-like"/>
</dbReference>
<dbReference type="InterPro" id="IPR041171">
    <property type="entry name" value="SDR_Ig"/>
</dbReference>
<dbReference type="InterPro" id="IPR005877">
    <property type="entry name" value="YSIRK_signal_dom"/>
</dbReference>
<dbReference type="NCBIfam" id="TIGR01167">
    <property type="entry name" value="LPXTG_anchor"/>
    <property type="match status" value="1"/>
</dbReference>
<dbReference type="NCBIfam" id="NF033609">
    <property type="entry name" value="MSCRAMM_ClfA"/>
    <property type="match status" value="1"/>
</dbReference>
<dbReference type="NCBIfam" id="TIGR01168">
    <property type="entry name" value="YSIRK_signal"/>
    <property type="match status" value="1"/>
</dbReference>
<dbReference type="PANTHER" id="PTHR34403">
    <property type="entry name" value="TOL-PAL SYSTEM PROTEIN TOLA"/>
    <property type="match status" value="1"/>
</dbReference>
<dbReference type="PANTHER" id="PTHR34403:SF8">
    <property type="entry name" value="TOL-PAL SYSTEM PROTEIN TOLA"/>
    <property type="match status" value="1"/>
</dbReference>
<dbReference type="Pfam" id="PF17961">
    <property type="entry name" value="Big_8"/>
    <property type="match status" value="1"/>
</dbReference>
<dbReference type="Pfam" id="PF00746">
    <property type="entry name" value="Gram_pos_anchor"/>
    <property type="match status" value="1"/>
</dbReference>
<dbReference type="Pfam" id="PF10425">
    <property type="entry name" value="SdrG_C_C"/>
    <property type="match status" value="1"/>
</dbReference>
<dbReference type="Pfam" id="PF04650">
    <property type="entry name" value="YSIRK_signal"/>
    <property type="match status" value="1"/>
</dbReference>
<dbReference type="SUPFAM" id="SSF49401">
    <property type="entry name" value="Bacterial adhesins"/>
    <property type="match status" value="2"/>
</dbReference>
<dbReference type="PROSITE" id="PS50847">
    <property type="entry name" value="GRAM_POS_ANCHORING"/>
    <property type="match status" value="1"/>
</dbReference>
<organism>
    <name type="scientific">Staphylococcus aureus (strain MW2)</name>
    <dbReference type="NCBI Taxonomy" id="196620"/>
    <lineage>
        <taxon>Bacteria</taxon>
        <taxon>Bacillati</taxon>
        <taxon>Bacillota</taxon>
        <taxon>Bacilli</taxon>
        <taxon>Bacillales</taxon>
        <taxon>Staphylococcaceae</taxon>
        <taxon>Staphylococcus</taxon>
    </lineage>
</organism>
<sequence length="946" mass="98238">MNMKKKEKHAIRKKSIGVASVLVGTLIGFGLLSSKEADASENSVTQSDSASNESKSNDSSSVSAAPKTDDTNVSDTKTSSNTNNGETSVAQNPAQQETTQSALTNATTEETPVTGEATTATNQANTPATTQSSNTNAEELVNQTSNETTSNDTNTVSSVNSPQNSTNAENVSTTQDTSTEATPSNNESAPQSTDASNKDVVNQAVNTSAPRMRAFSLSAVAADAPAAGKDITNQLTNVTVGIDSGDTVYPHQAGYVKLNYGFSVPNSAVKGDTFKITVPKELNLNGVTSTAKVPPIMAGDQVLANGVIDSDGNVIYTFTDYVDTKENVTANITMPAYIDPENVTKTGNVTLTTGIGSTTANKTVLVDYEKYGKFYNLSIKGTIDQIDKTNNTYRQTIYVNPSGDNVIAPVLTGNLKPNTDSNALIDQQNTSIKVYKVDNAADLSESYFVNPENFEDVTNSVNITFPNPNQYKVEFNTPDDQITTPYIVVVNGHIDPNSKGDLALRSTLYGYDSRFVWRSMSWDNEVAFNNGSGSGDGIDKPVVPEQPDEPGEIEPIPEDSDSDPGSDSGSDSNSDSGSDSGSDSTSDSGSDSASDSDSASDSDSASDSDSASDSDSASDSDSASDSDSASDSDSASDSDSASDSDSDNDSDSDSDSDSDSDSDSDSDSDSDSDSDSDSDSDSDSDSDSDSDSDSDSDSDSDSDSDSDSDSDSDSDSDSDSDSDSDSDSDSDSDSDSDSDSDSDSDSDSNSDSDSDSDSDSDSDSDSDSDSDSDSDSDSDSDSDSASDSDSDSDSDSDSDSDSDSDSDSDSDSDSDSDSDSDSDSESDSDSESDSDSDSDSDSDSDSDSDSASDSDSGSDSDSSSDSDSESDSNSDSESGSNNNVVPPNSPKNGTNASNKNEAKDSKEPLPDTGSEDEANTSLIWGLLASIGSLLLFRRKKENKDKK</sequence>
<reference key="1">
    <citation type="journal article" date="2002" name="Lancet">
        <title>Genome and virulence determinants of high virulence community-acquired MRSA.</title>
        <authorList>
            <person name="Baba T."/>
            <person name="Takeuchi F."/>
            <person name="Kuroda M."/>
            <person name="Yuzawa H."/>
            <person name="Aoki K."/>
            <person name="Oguchi A."/>
            <person name="Nagai Y."/>
            <person name="Iwama N."/>
            <person name="Asano K."/>
            <person name="Naimi T."/>
            <person name="Kuroda H."/>
            <person name="Cui L."/>
            <person name="Yamamoto K."/>
            <person name="Hiramatsu K."/>
        </authorList>
    </citation>
    <scope>NUCLEOTIDE SEQUENCE [LARGE SCALE GENOMIC DNA]</scope>
    <source>
        <strain>MW2</strain>
    </source>
</reference>
<comment type="function">
    <text evidence="1">Cell surface-associated protein implicated in virulence. Promotes bacterial attachment exclusively to the gamma-chain of human fibrinogen. Induces formation of bacterial clumps (By similarity).</text>
</comment>
<comment type="subcellular location">
    <subcellularLocation>
        <location evidence="4">Secreted</location>
        <location evidence="4">Cell wall</location>
        <topology evidence="4">Peptidoglycan-anchor</topology>
    </subcellularLocation>
    <text evidence="2">Anchored to the cell wall by sortase A (By similarity).</text>
</comment>
<comment type="similarity">
    <text evidence="6">Belongs to the serine-aspartate repeat-containing protein (SDr) family.</text>
</comment>
<proteinExistence type="inferred from homology"/>